<organism>
    <name type="scientific">Aeropyrum pernix (strain ATCC 700893 / DSM 11879 / JCM 9820 / NBRC 100138 / K1)</name>
    <dbReference type="NCBI Taxonomy" id="272557"/>
    <lineage>
        <taxon>Archaea</taxon>
        <taxon>Thermoproteota</taxon>
        <taxon>Thermoprotei</taxon>
        <taxon>Desulfurococcales</taxon>
        <taxon>Desulfurococcaceae</taxon>
        <taxon>Aeropyrum</taxon>
    </lineage>
</organism>
<keyword id="KW-1185">Reference proteome</keyword>
<dbReference type="EMBL" id="BA000002">
    <property type="protein sequence ID" value="BAA80807.1"/>
    <property type="molecule type" value="Genomic_DNA"/>
</dbReference>
<dbReference type="PIR" id="B72565">
    <property type="entry name" value="B72565"/>
</dbReference>
<dbReference type="RefSeq" id="WP_010866604.1">
    <property type="nucleotide sequence ID" value="NC_000854.2"/>
</dbReference>
<dbReference type="STRING" id="272557.APE_1804"/>
<dbReference type="EnsemblBacteria" id="BAA80807">
    <property type="protein sequence ID" value="BAA80807"/>
    <property type="gene ID" value="APE_1804"/>
</dbReference>
<dbReference type="GeneID" id="1446251"/>
<dbReference type="KEGG" id="ape:APE_1804"/>
<dbReference type="PATRIC" id="fig|272557.25.peg.1209"/>
<dbReference type="eggNOG" id="arCOG04197">
    <property type="taxonomic scope" value="Archaea"/>
</dbReference>
<dbReference type="Proteomes" id="UP000002518">
    <property type="component" value="Chromosome"/>
</dbReference>
<sequence length="418" mass="48874">MSGTAGFITVSPGPPTEAPGGFPREPRGHRVRFISFKPYKFYWGFPNMSYITLTLPFNVGGGEAGDLFSTAWLFKTATHRMLSLAKQTPILPATDIGWKNTFRKAIYEVIPNRRYVDGVITLVRGIYESCRQLGVGFKEVELGDWLMFQQAEKEYPVRNITLKDDYSFYITTIGYNGEKDRIVVKPTIPKNYKVLLDKILEERQKHTARIVIKDYGVRKNRLWVHGEIQLTIPIDFYYKHMTRYRRNYGKLYGGVDVNVDRANLAVVDRYGRLRHVKTFWFEEASRKGCRSRRARSIIGMTVHDMLKYAYHHGVKTLFLENPDVLGKLKLLWIRNGKRLHRNYNWRVSVFRSRIIEMITMKTPLYAIRVEYVDPRRTTHSEEHDKIMKRYGLDRHSTSAYLIALRGIERYSPIQKVTA</sequence>
<accession>Q9YAZ1</accession>
<comment type="similarity">
    <text evidence="2">To A.pernix APE_1276 and S.solfataricus SSO2105.</text>
</comment>
<protein>
    <recommendedName>
        <fullName>Uncharacterized protein APE_1804</fullName>
    </recommendedName>
</protein>
<feature type="chain" id="PRO_0000216224" description="Uncharacterized protein APE_1804">
    <location>
        <begin position="1"/>
        <end position="418"/>
    </location>
</feature>
<feature type="region of interest" description="Disordered" evidence="1">
    <location>
        <begin position="1"/>
        <end position="24"/>
    </location>
</feature>
<gene>
    <name type="ordered locus">APE_1804</name>
</gene>
<proteinExistence type="predicted"/>
<reference key="1">
    <citation type="journal article" date="1999" name="DNA Res.">
        <title>Complete genome sequence of an aerobic hyper-thermophilic crenarchaeon, Aeropyrum pernix K1.</title>
        <authorList>
            <person name="Kawarabayasi Y."/>
            <person name="Hino Y."/>
            <person name="Horikawa H."/>
            <person name="Yamazaki S."/>
            <person name="Haikawa Y."/>
            <person name="Jin-no K."/>
            <person name="Takahashi M."/>
            <person name="Sekine M."/>
            <person name="Baba S."/>
            <person name="Ankai A."/>
            <person name="Kosugi H."/>
            <person name="Hosoyama A."/>
            <person name="Fukui S."/>
            <person name="Nagai Y."/>
            <person name="Nishijima K."/>
            <person name="Nakazawa H."/>
            <person name="Takamiya M."/>
            <person name="Masuda S."/>
            <person name="Funahashi T."/>
            <person name="Tanaka T."/>
            <person name="Kudoh Y."/>
            <person name="Yamazaki J."/>
            <person name="Kushida N."/>
            <person name="Oguchi A."/>
            <person name="Aoki K."/>
            <person name="Kubota K."/>
            <person name="Nakamura Y."/>
            <person name="Nomura N."/>
            <person name="Sako Y."/>
            <person name="Kikuchi H."/>
        </authorList>
    </citation>
    <scope>NUCLEOTIDE SEQUENCE [LARGE SCALE GENOMIC DNA]</scope>
    <source>
        <strain>ATCC 700893 / DSM 11879 / JCM 9820 / NBRC 100138 / K1</strain>
    </source>
</reference>
<evidence type="ECO:0000256" key="1">
    <source>
        <dbReference type="SAM" id="MobiDB-lite"/>
    </source>
</evidence>
<evidence type="ECO:0000305" key="2"/>
<name>Y1804_AERPE</name>